<organism evidence="18">
    <name type="scientific">Plasmodium berghei (strain Anka)</name>
    <dbReference type="NCBI Taxonomy" id="5823"/>
    <lineage>
        <taxon>Eukaryota</taxon>
        <taxon>Sar</taxon>
        <taxon>Alveolata</taxon>
        <taxon>Apicomplexa</taxon>
        <taxon>Aconoidasida</taxon>
        <taxon>Haemosporida</taxon>
        <taxon>Plasmodiidae</taxon>
        <taxon>Plasmodium</taxon>
        <taxon>Plasmodium (Vinckeia)</taxon>
    </lineage>
</organism>
<sequence>MKLLGNSKYFFVVLLLCISVFLNGQEILDEIKYSEEVCNEQIDLHILLDGSGSIGHSNWISHVIPMLTTLVDNLNISRDEINISMTLFSTYARELVRLKRYGSTSKASLRFIIAQLQNNYSPHGTTNLTSALLNVDNLIQKKMNRPNAIQLVIILTDGIPNNLKKSTTVVNQLKKKDVNVAIIGVGAGVNNMFNRILVGCGKLGPCPYYSYGSWDQAQTMIKPFLSKVCQEVEKVALCGKWEEWSECSTTCDNGTKIRKRKVLHPNCAGEMTAPCKVRDCPPKPVAPPVIPIKVPDVPVKPVEPIEPAEPAEPAEPAEPAEPAEPAEPAEPAEPAEPAEPAEPAEPAEPAEPAEPAEPAEPAEPAKPAEPAEPAEPAEPAEPVNPDNPILPIKPEEPSGGAEPLNPEVENPFIIPDEPIEPIIAPGAVPDKPIIPEESNELPNNLPESPSDSQVEYPRPNDNGDNSNNTINSNKNIPNKHVPPTDDNPYKGQEERIPKPHRSNDEYIYYNNANNNDKLEPEIPSKDYEENKSKKQSKSNNGYKIAGGIIGGLAIIGCIGVGYNFIAGSSAAAMAGEAAPFEDVMADDEKGIVENEQFKLPEDNDWN</sequence>
<evidence type="ECO:0000255" key="1"/>
<evidence type="ECO:0000255" key="2">
    <source>
        <dbReference type="PROSITE-ProRule" id="PRU00210"/>
    </source>
</evidence>
<evidence type="ECO:0000255" key="3">
    <source>
        <dbReference type="PROSITE-ProRule" id="PRU00219"/>
    </source>
</evidence>
<evidence type="ECO:0000256" key="4">
    <source>
        <dbReference type="SAM" id="MobiDB-lite"/>
    </source>
</evidence>
<evidence type="ECO:0000269" key="5">
    <source>
    </source>
</evidence>
<evidence type="ECO:0000269" key="6">
    <source>
    </source>
</evidence>
<evidence type="ECO:0000269" key="7">
    <source>
    </source>
</evidence>
<evidence type="ECO:0000269" key="8">
    <source>
    </source>
</evidence>
<evidence type="ECO:0000269" key="9">
    <source>
    </source>
</evidence>
<evidence type="ECO:0000303" key="10">
    <source>
    </source>
</evidence>
<evidence type="ECO:0000303" key="11">
    <source>
    </source>
</evidence>
<evidence type="ECO:0000303" key="12">
    <source>
    </source>
</evidence>
<evidence type="ECO:0000303" key="13">
    <source>
    </source>
</evidence>
<evidence type="ECO:0000303" key="14">
    <source>
    </source>
</evidence>
<evidence type="ECO:0000305" key="15"/>
<evidence type="ECO:0000312" key="16">
    <source>
        <dbReference type="EMBL" id="AAB63302.1"/>
    </source>
</evidence>
<evidence type="ECO:0000312" key="17">
    <source>
        <dbReference type="EMBL" id="VUC57885.1"/>
    </source>
</evidence>
<evidence type="ECO:0000312" key="18">
    <source>
        <dbReference type="Proteomes" id="UP000074855"/>
    </source>
</evidence>
<evidence type="ECO:0007829" key="19">
    <source>
        <dbReference type="PDB" id="2EPH"/>
    </source>
</evidence>
<evidence type="ECO:0007829" key="20">
    <source>
        <dbReference type="PDB" id="2PC4"/>
    </source>
</evidence>
<reference evidence="16" key="1">
    <citation type="journal article" date="1997" name="Mol. Biochem. Parasitol.">
        <title>Cloning and expression of the thrombospondin related adhesive protein gene of Plasmodium berghei.</title>
        <authorList>
            <person name="Robson K.J."/>
            <person name="Naitza S."/>
            <person name="Barker G."/>
            <person name="Sinden R.E."/>
            <person name="Crisanti A."/>
        </authorList>
    </citation>
    <scope>NUCLEOTIDE SEQUENCE [GENOMIC DNA]</scope>
    <scope>SUBCELLULAR LOCATION</scope>
    <scope>DEVELOPMENTAL STAGE</scope>
    <source>
        <strain evidence="16">ANKA</strain>
    </source>
</reference>
<reference evidence="18" key="2">
    <citation type="journal article" date="2014" name="BMC Biol.">
        <title>A comprehensive evaluation of rodent malaria parasite genomes and gene expression.</title>
        <authorList>
            <person name="Otto T.D."/>
            <person name="Bohme U."/>
            <person name="Jackson A.P."/>
            <person name="Hunt M."/>
            <person name="Franke-Fayard B."/>
            <person name="Hoeijmakers W.A."/>
            <person name="Religa A.A."/>
            <person name="Robertson L."/>
            <person name="Sanders M."/>
            <person name="Ogun S.A."/>
            <person name="Cunningham D."/>
            <person name="Erhart A."/>
            <person name="Billker O."/>
            <person name="Khan S.M."/>
            <person name="Stunnenberg H.G."/>
            <person name="Langhorne J."/>
            <person name="Holder A.A."/>
            <person name="Waters A.P."/>
            <person name="Newbold C.I."/>
            <person name="Pain A."/>
            <person name="Berriman M."/>
            <person name="Janse C.J."/>
        </authorList>
    </citation>
    <scope>NUCLEOTIDE SEQUENCE [LARGE SCALE GENOMIC DNA]</scope>
    <source>
        <strain evidence="18">ANKA</strain>
    </source>
</reference>
<reference evidence="15" key="3">
    <citation type="journal article" date="1997" name="Cell">
        <title>TRAP is necessary for gliding motility and infectivity of plasmodium sporozoites.</title>
        <authorList>
            <person name="Sultan A.A."/>
            <person name="Thathy V."/>
            <person name="Frevert U."/>
            <person name="Robson K.J."/>
            <person name="Crisanti A."/>
            <person name="Nussenzweig V."/>
            <person name="Nussenzweig R.S."/>
            <person name="Menard R."/>
        </authorList>
    </citation>
    <scope>FUNCTION</scope>
    <scope>DEVELOPMENTAL STAGE</scope>
    <scope>DISRUPTION PHENOTYPE</scope>
    <source>
        <strain evidence="14">NK65</strain>
    </source>
</reference>
<reference evidence="15" key="4">
    <citation type="journal article" date="2002" name="EMBO J.">
        <title>Plasmodium sporozoite invasion into insect and mammalian cells is directed by the same dual binding system.</title>
        <authorList>
            <person name="Matuschewski K."/>
            <person name="Nunes A.C."/>
            <person name="Nussenzweig V."/>
            <person name="Menard R."/>
        </authorList>
    </citation>
    <scope>FUNCTION</scope>
    <scope>SUBCELLULAR LOCATION</scope>
    <scope>DEVELOPMENTAL STAGE</scope>
    <scope>DISRUPTION PHENOTYPE</scope>
    <scope>MUTAGENESIS OF THR-126; ASP-157; TRP-244 AND 256-LYS--LYS-261</scope>
</reference>
<reference evidence="15" key="5">
    <citation type="journal article" date="2005" name="Infect. Immun.">
        <title>Fetuin-A, a hepatocyte-specific protein that binds Plasmodium berghei thrombospondin-related adhesive protein: a potential role in infectivity.</title>
        <authorList>
            <person name="Jethwaney D."/>
            <person name="Lepore T."/>
            <person name="Hassan S."/>
            <person name="Mello K."/>
            <person name="Rangarajan R."/>
            <person name="Jahnen-Dechent W."/>
            <person name="Wirth D."/>
            <person name="Sultan A.A."/>
        </authorList>
    </citation>
    <scope>FUNCTION</scope>
    <scope>INTERACTION WITH HUMAN AHSG</scope>
    <scope>MUTAGENESIS OF THR-126</scope>
    <source>
        <strain evidence="11">NK65</strain>
    </source>
</reference>
<reference evidence="15" key="6">
    <citation type="journal article" date="2009" name="PLoS Pathog.">
        <title>Malaria parasite invasion of the mosquito salivary gland requires interaction between the Plasmodium TRAP and the Anopheles saglin proteins.</title>
        <authorList>
            <person name="Ghosh A.K."/>
            <person name="Devenport M."/>
            <person name="Jethwaney D."/>
            <person name="Kalume D.E."/>
            <person name="Pandey A."/>
            <person name="Anderson V.E."/>
            <person name="Sultan A.A."/>
            <person name="Kumar N."/>
            <person name="Jacobs-Lorena M."/>
        </authorList>
    </citation>
    <scope>INTERACTION WITH MOSQUITO SG1F</scope>
    <scope>MUTAGENESIS OF THR-126</scope>
    <source>
        <strain evidence="12">ANKA</strain>
    </source>
</reference>
<reference evidence="19 20" key="7">
    <citation type="journal article" date="2007" name="Proc. Natl. Acad. Sci. U.S.A.">
        <title>Aldolase provides an unusual binding site for thrombospondin-related anonymous protein in the invasion machinery of the malaria parasite.</title>
        <authorList>
            <person name="Bosch J."/>
            <person name="Buscaglia C.A."/>
            <person name="Krumm B."/>
            <person name="Ingason B.P."/>
            <person name="Lucas R."/>
            <person name="Roach C."/>
            <person name="Cardozo T."/>
            <person name="Nussenzweig V."/>
            <person name="Hol W.G."/>
        </authorList>
    </citation>
    <scope>X-RAY CRYSTALLOGRAPHY (2.40 ANGSTROMS) OF 601-606 IN COMPLEX WITH PLASMODIUM FALCIPARUM FBPA</scope>
</reference>
<gene>
    <name evidence="10 11 12 13 14" type="primary">TRAP</name>
    <name evidence="17" type="ORF">PBANKA_1349800</name>
</gene>
<feature type="signal peptide" evidence="1">
    <location>
        <begin position="1"/>
        <end position="24"/>
    </location>
</feature>
<feature type="chain" id="PRO_5021488062" description="Thrombospondin-related anonymous protein" evidence="1">
    <location>
        <begin position="25"/>
        <end position="606"/>
    </location>
</feature>
<feature type="transmembrane region" description="Helical" evidence="1">
    <location>
        <begin position="544"/>
        <end position="564"/>
    </location>
</feature>
<feature type="domain" description="VWFA" evidence="3">
    <location>
        <begin position="43"/>
        <end position="228"/>
    </location>
</feature>
<feature type="domain" description="TSP type-1" evidence="2">
    <location>
        <begin position="235"/>
        <end position="281"/>
    </location>
</feature>
<feature type="region of interest" description="Disordered" evidence="4">
    <location>
        <begin position="301"/>
        <end position="541"/>
    </location>
</feature>
<feature type="compositionally biased region" description="Low complexity" evidence="4">
    <location>
        <begin position="409"/>
        <end position="425"/>
    </location>
</feature>
<feature type="compositionally biased region" description="Low complexity" evidence="4">
    <location>
        <begin position="440"/>
        <end position="450"/>
    </location>
</feature>
<feature type="compositionally biased region" description="Low complexity" evidence="4">
    <location>
        <begin position="459"/>
        <end position="479"/>
    </location>
</feature>
<feature type="compositionally biased region" description="Basic and acidic residues" evidence="4">
    <location>
        <begin position="487"/>
        <end position="504"/>
    </location>
</feature>
<feature type="compositionally biased region" description="Basic and acidic residues" evidence="4">
    <location>
        <begin position="516"/>
        <end position="532"/>
    </location>
</feature>
<feature type="mutagenesis site" description="Abolishes interaction with mosquito saglin/SG1f. Abolishes interaction with human AHSG. Decreases sporozoite capacity to invade mosquito salivary glands. Decreases sporozoite capacity to infect host liver. No significant effects on the numbers of midgut sporozoites. No significant effects on sporozoite gliding motility. Strongly decreases sporozoite capacity to invade mosquito salivary glands and abolishes sporozoite capacity to infect host liver; when associated with 256-A--A-261." evidence="5 6 7">
    <original>T</original>
    <variation>A</variation>
    <location>
        <position position="126"/>
    </location>
</feature>
<feature type="mutagenesis site" description="Decreases sporozoite capacity to invade mosquito salivary glands. Decreases sporozoite capacity to infect host liver. No significant effects on the numbers of midgut sporozoites. No significant effects on sporozoite gliding motility." evidence="5">
    <original>D</original>
    <variation>A</variation>
    <location>
        <position position="157"/>
    </location>
</feature>
<feature type="mutagenesis site" description="Decreases sporozoite capacity to invade mosquito salivary glands. No significant effects on sporozoite capacity to infect host liver. No significant effects on the numbers of midgut sporozoites. No significant effects on sporozoite gliding motility." evidence="5">
    <original>W</original>
    <variation>A</variation>
    <location>
        <position position="244"/>
    </location>
</feature>
<feature type="mutagenesis site" description="Decreases sporozoite capacity to invade mosquito salivary glands. No significant effects on sporozoite capacity to infect host liver. No significant effects on the numbers of midgut sporozoites. No significant effects on sporozoite gliding motility. Strongly decreases sporozoite capacity to invade mosquito salivary glands and abolishes sporozoite capacity to infect host liver; when associated with A-126." evidence="5">
    <original>KIRKRK</original>
    <variation>AIAAAA</variation>
    <location>
        <begin position="256"/>
        <end position="261"/>
    </location>
</feature>
<accession>A0A509AST0</accession>
<accession>P90573</accession>
<name>TRAP_PLABA</name>
<protein>
    <recommendedName>
        <fullName evidence="12 14">Thrombospondin-related anonymous protein</fullName>
    </recommendedName>
    <alternativeName>
        <fullName evidence="11 13">Thrombospondin-related adhesive protein</fullName>
        <shortName evidence="13">PbTRAP</shortName>
    </alternativeName>
</protein>
<dbReference type="EMBL" id="U67763">
    <property type="protein sequence ID" value="AAB63302.1"/>
    <property type="molecule type" value="Genomic_DNA"/>
</dbReference>
<dbReference type="EMBL" id="LK023128">
    <property type="protein sequence ID" value="VUC57885.1"/>
    <property type="molecule type" value="Genomic_DNA"/>
</dbReference>
<dbReference type="EMBL" id="LT160033">
    <property type="protein sequence ID" value="CXJ01467.1"/>
    <property type="molecule type" value="Genomic_DNA"/>
</dbReference>
<dbReference type="PDB" id="2EPH">
    <property type="method" value="X-ray"/>
    <property type="resolution" value="2.70 A"/>
    <property type="chains" value="H=601-606"/>
</dbReference>
<dbReference type="PDB" id="2PC4">
    <property type="method" value="X-ray"/>
    <property type="resolution" value="2.40 A"/>
    <property type="chains" value="H=601-606"/>
</dbReference>
<dbReference type="PDBsum" id="2EPH"/>
<dbReference type="PDBsum" id="2PC4"/>
<dbReference type="SMR" id="A0A509AST0"/>
<dbReference type="DIP" id="DIP-60916N"/>
<dbReference type="FunCoup" id="A0A509AST0">
    <property type="interactions" value="698"/>
</dbReference>
<dbReference type="IntAct" id="A0A509AST0">
    <property type="interactions" value="1"/>
</dbReference>
<dbReference type="STRING" id="5823.A0A509AST0"/>
<dbReference type="VEuPathDB" id="PlasmoDB:PBANKA_1349800"/>
<dbReference type="InParanoid" id="A0A509AST0"/>
<dbReference type="OMA" id="PEDNDWN"/>
<dbReference type="Proteomes" id="UP000069549">
    <property type="component" value="Chromosome 13"/>
</dbReference>
<dbReference type="Proteomes" id="UP000074855">
    <property type="component" value="Chromosome 13"/>
</dbReference>
<dbReference type="GO" id="GO:0005737">
    <property type="term" value="C:cytoplasm"/>
    <property type="evidence" value="ECO:0007669"/>
    <property type="project" value="UniProtKB-SubCell"/>
</dbReference>
<dbReference type="GO" id="GO:0005886">
    <property type="term" value="C:plasma membrane"/>
    <property type="evidence" value="ECO:0007669"/>
    <property type="project" value="UniProtKB-SubCell"/>
</dbReference>
<dbReference type="Gene3D" id="2.20.100.10">
    <property type="entry name" value="Thrombospondin type-1 (TSP1) repeat"/>
    <property type="match status" value="1"/>
</dbReference>
<dbReference type="Gene3D" id="3.40.50.410">
    <property type="entry name" value="von Willebrand factor, type A domain"/>
    <property type="match status" value="1"/>
</dbReference>
<dbReference type="InterPro" id="IPR050525">
    <property type="entry name" value="ECM_Assembly_Org"/>
</dbReference>
<dbReference type="InterPro" id="IPR000884">
    <property type="entry name" value="TSP1_rpt"/>
</dbReference>
<dbReference type="InterPro" id="IPR036383">
    <property type="entry name" value="TSP1_rpt_sf"/>
</dbReference>
<dbReference type="InterPro" id="IPR002035">
    <property type="entry name" value="VWF_A"/>
</dbReference>
<dbReference type="InterPro" id="IPR036465">
    <property type="entry name" value="vWFA_dom_sf"/>
</dbReference>
<dbReference type="PANTHER" id="PTHR24020">
    <property type="entry name" value="COLLAGEN ALPHA"/>
    <property type="match status" value="1"/>
</dbReference>
<dbReference type="PANTHER" id="PTHR24020:SF20">
    <property type="entry name" value="PH DOMAIN-CONTAINING PROTEIN"/>
    <property type="match status" value="1"/>
</dbReference>
<dbReference type="Pfam" id="PF00090">
    <property type="entry name" value="TSP_1"/>
    <property type="match status" value="1"/>
</dbReference>
<dbReference type="Pfam" id="PF00092">
    <property type="entry name" value="VWA"/>
    <property type="match status" value="1"/>
</dbReference>
<dbReference type="SMART" id="SM00209">
    <property type="entry name" value="TSP1"/>
    <property type="match status" value="1"/>
</dbReference>
<dbReference type="SMART" id="SM00327">
    <property type="entry name" value="VWA"/>
    <property type="match status" value="1"/>
</dbReference>
<dbReference type="SUPFAM" id="SSF82895">
    <property type="entry name" value="TSP-1 type 1 repeat"/>
    <property type="match status" value="1"/>
</dbReference>
<dbReference type="SUPFAM" id="SSF53300">
    <property type="entry name" value="vWA-like"/>
    <property type="match status" value="1"/>
</dbReference>
<dbReference type="PROSITE" id="PS50092">
    <property type="entry name" value="TSP1"/>
    <property type="match status" value="1"/>
</dbReference>
<dbReference type="PROSITE" id="PS50234">
    <property type="entry name" value="VWFA"/>
    <property type="match status" value="1"/>
</dbReference>
<comment type="function">
    <text evidence="5 6 9">Promotes parasite ability to invade host hepatocytes (PubMed:11927544, PubMed:16113307, PubMed:9267031). Promotes parasite ability to invade mosquito salivary glands (PubMed:11927544, PubMed:9267031). Required for sporozoite gliding motility (PubMed:11927544, PubMed:9267031).</text>
</comment>
<comment type="subunit">
    <text evidence="6 7">Interacts (via integrin-like A-domain) with Anopheles gambiae saglin/SG1F; the interaction probably promotes sporozoite invasion of salivary gland (PubMed:19148273). Interacts (via integrin-like A-domain) with human AHSG; the interaction promotes sporozoite invasion of hepatocytes and formation of exoerythrocytic forms of parasites in human hepatoma HepG2 cells (PubMed:16113307).</text>
</comment>
<comment type="subcellular location">
    <subcellularLocation>
        <location evidence="5 8">Cell membrane</location>
        <topology evidence="1">Single-pass membrane protein</topology>
    </subcellularLocation>
    <subcellularLocation>
        <location evidence="8">Cytoplasm</location>
    </subcellularLocation>
</comment>
<comment type="developmental stage">
    <text evidence="5 8 9">Expressed in sporozoites from midguts of infected mosquitoes (at protein level) (PubMed:11927544, PubMed:9267031). Expressed in sporozoites from salivary glands of infected mosquitoes (at protein level) (PubMed:11927544, PubMed:9041516).</text>
</comment>
<comment type="disruption phenotype">
    <text evidence="5 9">Decreased sporozoite capacity to invade mosquito salivary glands (PubMed:11927544, PubMed:9267031). Decreased sporozoite capacity to infect host liver (PubMed:11927544, PubMed:9267031). Decreased sporozoite gliding motility in vitro (PubMed:11927544, PubMed:9267031). No significant effects on merozoite invasion and development of erythrocytic stages of the parasite (PubMed:9267031). No significant effects on the levels of mature gametocytes and the ability of male gametocytes to exflagellate (PubMed:9267031). No significant effects on sporozoite formation (PubMed:11927544, PubMed:9267031). Dispensable for sporozoite adhesion to human hepatoma HepG2 cells (PubMed:11927544).</text>
</comment>
<comment type="miscellaneous">
    <text evidence="6">Binds to human hepatoma HepG2 cells; binding is enhanced in the presence of divalent cations, such as Mn(2+) or Mg(2+).</text>
</comment>
<keyword id="KW-0002">3D-structure</keyword>
<keyword id="KW-1003">Cell membrane</keyword>
<keyword id="KW-0963">Cytoplasm</keyword>
<keyword id="KW-0472">Membrane</keyword>
<keyword id="KW-1185">Reference proteome</keyword>
<keyword id="KW-0732">Signal</keyword>
<keyword id="KW-0812">Transmembrane</keyword>
<keyword id="KW-1133">Transmembrane helix</keyword>
<proteinExistence type="evidence at protein level"/>